<protein>
    <recommendedName>
        <fullName>Deoxyuridine 5'-triphosphate nucleotidohydrolase</fullName>
        <shortName>dUTPase</shortName>
        <ecNumber>3.6.1.23</ecNumber>
    </recommendedName>
    <alternativeName>
        <fullName>dUTP pyrophosphatase</fullName>
    </alternativeName>
</protein>
<evidence type="ECO:0000250" key="1"/>
<evidence type="ECO:0000250" key="2">
    <source>
        <dbReference type="UniProtKB" id="P17374"/>
    </source>
</evidence>
<evidence type="ECO:0000305" key="3"/>
<gene>
    <name type="primary">OPG046</name>
    <name type="synonym">C6L</name>
    <name type="synonym">DUT</name>
    <name type="synonym">E2L</name>
    <name type="synonym">F2L</name>
</gene>
<keyword id="KW-0244">Early protein</keyword>
<keyword id="KW-0378">Hydrolase</keyword>
<keyword id="KW-0460">Magnesium</keyword>
<keyword id="KW-0479">Metal-binding</keyword>
<keyword id="KW-0546">Nucleotide metabolism</keyword>
<keyword id="KW-1185">Reference proteome</keyword>
<sequence length="147" mass="16465">MFNMNINSPVRFVKETNRAKSPTRQSPYAAGYDLYSAYDYTIPPGERQLIKTDISMSMPKFCYGRIAPRSGLSLKGIDIGGGVIDEDYRGNIGVILINNGKYTFNVNTGDRIAQLIYQRIYYPELKEVQSLDSTDRGDQGFGSTGLR</sequence>
<feature type="chain" id="PRO_0000182943" description="Deoxyuridine 5'-triphosphate nucleotidohydrolase">
    <location>
        <begin position="1"/>
        <end position="147"/>
    </location>
</feature>
<feature type="binding site" evidence="2">
    <location>
        <position position="24"/>
    </location>
    <ligand>
        <name>Mg(2+)</name>
        <dbReference type="ChEBI" id="CHEBI:18420"/>
    </ligand>
</feature>
<feature type="binding site" evidence="2">
    <location>
        <begin position="68"/>
        <end position="70"/>
    </location>
    <ligand>
        <name>dUTP</name>
        <dbReference type="ChEBI" id="CHEBI:61555"/>
    </ligand>
</feature>
<feature type="binding site" evidence="2">
    <location>
        <begin position="82"/>
        <end position="85"/>
    </location>
    <ligand>
        <name>dUTP</name>
        <dbReference type="ChEBI" id="CHEBI:61555"/>
    </ligand>
</feature>
<feature type="binding site" evidence="2">
    <location>
        <position position="88"/>
    </location>
    <ligand>
        <name>dUTP</name>
        <dbReference type="ChEBI" id="CHEBI:61555"/>
    </ligand>
</feature>
<feature type="binding site" evidence="2">
    <location>
        <position position="93"/>
    </location>
    <ligand>
        <name>dUTP</name>
        <dbReference type="ChEBI" id="CHEBI:61555"/>
    </ligand>
</feature>
<feature type="binding site" evidence="2">
    <location>
        <position position="95"/>
    </location>
    <ligand>
        <name>dUTP</name>
        <dbReference type="ChEBI" id="CHEBI:61555"/>
    </ligand>
</feature>
<feature type="binding site" evidence="2">
    <location>
        <position position="111"/>
    </location>
    <ligand>
        <name>dUTP</name>
        <dbReference type="ChEBI" id="CHEBI:61555"/>
    </ligand>
</feature>
<organismHost>
    <name type="scientific">Homo sapiens</name>
    <name type="common">Human</name>
    <dbReference type="NCBI Taxonomy" id="9606"/>
</organismHost>
<dbReference type="EC" id="3.6.1.23"/>
<dbReference type="EMBL" id="X69198">
    <property type="protein sequence ID" value="CAA48967.1"/>
    <property type="molecule type" value="Genomic_DNA"/>
</dbReference>
<dbReference type="PIR" id="F36839">
    <property type="entry name" value="F36839"/>
</dbReference>
<dbReference type="RefSeq" id="NP_042070.1">
    <property type="nucleotide sequence ID" value="NC_001611.1"/>
</dbReference>
<dbReference type="SMR" id="P0DSZ7"/>
<dbReference type="GeneID" id="1486386"/>
<dbReference type="KEGG" id="vg:1486386"/>
<dbReference type="Proteomes" id="UP000002060">
    <property type="component" value="Segment"/>
</dbReference>
<dbReference type="GO" id="GO:0004170">
    <property type="term" value="F:dUTP diphosphatase activity"/>
    <property type="evidence" value="ECO:0007669"/>
    <property type="project" value="UniProtKB-EC"/>
</dbReference>
<dbReference type="GO" id="GO:0000287">
    <property type="term" value="F:magnesium ion binding"/>
    <property type="evidence" value="ECO:0007669"/>
    <property type="project" value="InterPro"/>
</dbReference>
<dbReference type="GO" id="GO:0006226">
    <property type="term" value="P:dUMP biosynthetic process"/>
    <property type="evidence" value="ECO:0007669"/>
    <property type="project" value="InterPro"/>
</dbReference>
<dbReference type="GO" id="GO:0046081">
    <property type="term" value="P:dUTP catabolic process"/>
    <property type="evidence" value="ECO:0007669"/>
    <property type="project" value="InterPro"/>
</dbReference>
<dbReference type="CDD" id="cd07557">
    <property type="entry name" value="trimeric_dUTPase"/>
    <property type="match status" value="1"/>
</dbReference>
<dbReference type="Gene3D" id="2.70.40.10">
    <property type="match status" value="1"/>
</dbReference>
<dbReference type="InterPro" id="IPR008181">
    <property type="entry name" value="dUTPase"/>
</dbReference>
<dbReference type="InterPro" id="IPR029054">
    <property type="entry name" value="dUTPase-like"/>
</dbReference>
<dbReference type="InterPro" id="IPR036157">
    <property type="entry name" value="dUTPase-like_sf"/>
</dbReference>
<dbReference type="InterPro" id="IPR033704">
    <property type="entry name" value="dUTPase_trimeric"/>
</dbReference>
<dbReference type="NCBIfam" id="TIGR00576">
    <property type="entry name" value="dut"/>
    <property type="match status" value="1"/>
</dbReference>
<dbReference type="NCBIfam" id="NF001862">
    <property type="entry name" value="PRK00601.1"/>
    <property type="match status" value="1"/>
</dbReference>
<dbReference type="PANTHER" id="PTHR11241">
    <property type="entry name" value="DEOXYURIDINE 5'-TRIPHOSPHATE NUCLEOTIDOHYDROLASE"/>
    <property type="match status" value="1"/>
</dbReference>
<dbReference type="PANTHER" id="PTHR11241:SF0">
    <property type="entry name" value="DEOXYURIDINE 5'-TRIPHOSPHATE NUCLEOTIDOHYDROLASE"/>
    <property type="match status" value="1"/>
</dbReference>
<dbReference type="Pfam" id="PF00692">
    <property type="entry name" value="dUTPase"/>
    <property type="match status" value="1"/>
</dbReference>
<dbReference type="SUPFAM" id="SSF51283">
    <property type="entry name" value="dUTPase-like"/>
    <property type="match status" value="1"/>
</dbReference>
<proteinExistence type="inferred from homology"/>
<accession>P0DSZ7</accession>
<accession>P33826</accession>
<accession>Q76Q48</accession>
<comment type="function">
    <text evidence="2">This enzyme is involved in nucleotide metabolism: it produces dUMP, the immediate precursor of thymidine nucleotides and it decreases the intracellular concentration of dUTP so that uracil cannot be incorporated into DNA.</text>
</comment>
<comment type="catalytic activity">
    <reaction evidence="2">
        <text>dUTP + H2O = dUMP + diphosphate + H(+)</text>
        <dbReference type="Rhea" id="RHEA:10248"/>
        <dbReference type="ChEBI" id="CHEBI:15377"/>
        <dbReference type="ChEBI" id="CHEBI:15378"/>
        <dbReference type="ChEBI" id="CHEBI:33019"/>
        <dbReference type="ChEBI" id="CHEBI:61555"/>
        <dbReference type="ChEBI" id="CHEBI:246422"/>
        <dbReference type="EC" id="3.6.1.23"/>
    </reaction>
    <physiologicalReaction direction="left-to-right" evidence="2">
        <dbReference type="Rhea" id="RHEA:10249"/>
    </physiologicalReaction>
</comment>
<comment type="cofactor">
    <cofactor evidence="1">
        <name>Mg(2+)</name>
        <dbReference type="ChEBI" id="CHEBI:18420"/>
    </cofactor>
</comment>
<comment type="induction">
    <text evidence="2">Expressed in the early phase of the viral replicative cycle.</text>
</comment>
<comment type="similarity">
    <text evidence="3">Belongs to the dUTPase family.</text>
</comment>
<name>DUT_VAR67</name>
<organism>
    <name type="scientific">Variola virus (isolate Human/India/Ind3/1967)</name>
    <name type="common">VARV</name>
    <name type="synonym">Smallpox virus</name>
    <dbReference type="NCBI Taxonomy" id="587200"/>
    <lineage>
        <taxon>Viruses</taxon>
        <taxon>Varidnaviria</taxon>
        <taxon>Bamfordvirae</taxon>
        <taxon>Nucleocytoviricota</taxon>
        <taxon>Pokkesviricetes</taxon>
        <taxon>Chitovirales</taxon>
        <taxon>Poxviridae</taxon>
        <taxon>Chordopoxvirinae</taxon>
        <taxon>Orthopoxvirus</taxon>
        <taxon>Variola virus</taxon>
    </lineage>
</organism>
<reference key="1">
    <citation type="journal article" date="1993" name="FEBS Lett.">
        <title>Genes of variola and vaccinia viruses necessary to overcome the host protective mechanisms.</title>
        <authorList>
            <person name="Shchelkunov S.N."/>
            <person name="Blinov V.M."/>
            <person name="Sandakhchiev L.S."/>
        </authorList>
    </citation>
    <scope>NUCLEOTIDE SEQUENCE [GENOMIC DNA]</scope>
</reference>